<comment type="function">
    <text evidence="1">Siroheme synthase involved in methionine biosynthesis.</text>
</comment>
<comment type="catalytic activity">
    <reaction>
        <text>uroporphyrinogen III + 2 S-adenosyl-L-methionine = precorrin-2 + 2 S-adenosyl-L-homocysteine + H(+)</text>
        <dbReference type="Rhea" id="RHEA:32459"/>
        <dbReference type="ChEBI" id="CHEBI:15378"/>
        <dbReference type="ChEBI" id="CHEBI:57308"/>
        <dbReference type="ChEBI" id="CHEBI:57856"/>
        <dbReference type="ChEBI" id="CHEBI:58827"/>
        <dbReference type="ChEBI" id="CHEBI:59789"/>
        <dbReference type="EC" id="2.1.1.107"/>
    </reaction>
</comment>
<comment type="similarity">
    <text evidence="2">Belongs to the precorrin methyltransferase family.</text>
</comment>
<sequence length="496" mass="54712">MIVSWSLKDAVVVVVGSGKNAYRRVNLCLSENSSKIFWFCRSSADGGFDVGHLQLDAKKSDAIEILPISEFDPVRSLTTLGKEETDFLVDAVFVSESNHHEKEILHRTCKRYRIPLNIIDNPSLCSFTLPATWSEPPLQISLSTSSNGCRLAQRLLRHVVSSLPSGMPEAIERFGRVRAITKTPEKKQWINHVSDFWPLEKLVRMTEDDLLAIVSDNFSLPLSSSQSSSLANSYESLSTTLDKPSLTLDPEAFPTHKRGSIALIGSGPGSPDLLTVAARKAIMKADYVLADKLVPEAVLQLIPRHTPLFIARKFPGNADKAQDELHQVAFDALSRGDYVVRLKQGDPYIYGRGGEEYLFFTQHGYVPTVIPGISSALMAPISAGIPVTHRGVADQFLVCTGTGQKGSMPKIPSFVPTQTTVFLMALHRLEILVQALIESGWPRVLPVCIAERVSCPDQRFIFSTLEDVVEEYNKYESLPPGLLITGYSCNTLRNTA</sequence>
<accession>O74468</accession>
<accession>P78775</accession>
<accession>Q9URL1</accession>
<gene>
    <name type="ORF">SPCC1739.06c</name>
</gene>
<reference key="1">
    <citation type="journal article" date="2002" name="Nature">
        <title>The genome sequence of Schizosaccharomyces pombe.</title>
        <authorList>
            <person name="Wood V."/>
            <person name="Gwilliam R."/>
            <person name="Rajandream M.A."/>
            <person name="Lyne M.H."/>
            <person name="Lyne R."/>
            <person name="Stewart A."/>
            <person name="Sgouros J.G."/>
            <person name="Peat N."/>
            <person name="Hayles J."/>
            <person name="Baker S.G."/>
            <person name="Basham D."/>
            <person name="Bowman S."/>
            <person name="Brooks K."/>
            <person name="Brown D."/>
            <person name="Brown S."/>
            <person name="Chillingworth T."/>
            <person name="Churcher C.M."/>
            <person name="Collins M."/>
            <person name="Connor R."/>
            <person name="Cronin A."/>
            <person name="Davis P."/>
            <person name="Feltwell T."/>
            <person name="Fraser A."/>
            <person name="Gentles S."/>
            <person name="Goble A."/>
            <person name="Hamlin N."/>
            <person name="Harris D.E."/>
            <person name="Hidalgo J."/>
            <person name="Hodgson G."/>
            <person name="Holroyd S."/>
            <person name="Hornsby T."/>
            <person name="Howarth S."/>
            <person name="Huckle E.J."/>
            <person name="Hunt S."/>
            <person name="Jagels K."/>
            <person name="James K.D."/>
            <person name="Jones L."/>
            <person name="Jones M."/>
            <person name="Leather S."/>
            <person name="McDonald S."/>
            <person name="McLean J."/>
            <person name="Mooney P."/>
            <person name="Moule S."/>
            <person name="Mungall K.L."/>
            <person name="Murphy L.D."/>
            <person name="Niblett D."/>
            <person name="Odell C."/>
            <person name="Oliver K."/>
            <person name="O'Neil S."/>
            <person name="Pearson D."/>
            <person name="Quail M.A."/>
            <person name="Rabbinowitsch E."/>
            <person name="Rutherford K.M."/>
            <person name="Rutter S."/>
            <person name="Saunders D."/>
            <person name="Seeger K."/>
            <person name="Sharp S."/>
            <person name="Skelton J."/>
            <person name="Simmonds M.N."/>
            <person name="Squares R."/>
            <person name="Squares S."/>
            <person name="Stevens K."/>
            <person name="Taylor K."/>
            <person name="Taylor R.G."/>
            <person name="Tivey A."/>
            <person name="Walsh S.V."/>
            <person name="Warren T."/>
            <person name="Whitehead S."/>
            <person name="Woodward J.R."/>
            <person name="Volckaert G."/>
            <person name="Aert R."/>
            <person name="Robben J."/>
            <person name="Grymonprez B."/>
            <person name="Weltjens I."/>
            <person name="Vanstreels E."/>
            <person name="Rieger M."/>
            <person name="Schaefer M."/>
            <person name="Mueller-Auer S."/>
            <person name="Gabel C."/>
            <person name="Fuchs M."/>
            <person name="Duesterhoeft A."/>
            <person name="Fritzc C."/>
            <person name="Holzer E."/>
            <person name="Moestl D."/>
            <person name="Hilbert H."/>
            <person name="Borzym K."/>
            <person name="Langer I."/>
            <person name="Beck A."/>
            <person name="Lehrach H."/>
            <person name="Reinhardt R."/>
            <person name="Pohl T.M."/>
            <person name="Eger P."/>
            <person name="Zimmermann W."/>
            <person name="Wedler H."/>
            <person name="Wambutt R."/>
            <person name="Purnelle B."/>
            <person name="Goffeau A."/>
            <person name="Cadieu E."/>
            <person name="Dreano S."/>
            <person name="Gloux S."/>
            <person name="Lelaure V."/>
            <person name="Mottier S."/>
            <person name="Galibert F."/>
            <person name="Aves S.J."/>
            <person name="Xiang Z."/>
            <person name="Hunt C."/>
            <person name="Moore K."/>
            <person name="Hurst S.M."/>
            <person name="Lucas M."/>
            <person name="Rochet M."/>
            <person name="Gaillardin C."/>
            <person name="Tallada V.A."/>
            <person name="Garzon A."/>
            <person name="Thode G."/>
            <person name="Daga R.R."/>
            <person name="Cruzado L."/>
            <person name="Jimenez J."/>
            <person name="Sanchez M."/>
            <person name="del Rey F."/>
            <person name="Benito J."/>
            <person name="Dominguez A."/>
            <person name="Revuelta J.L."/>
            <person name="Moreno S."/>
            <person name="Armstrong J."/>
            <person name="Forsburg S.L."/>
            <person name="Cerutti L."/>
            <person name="Lowe T."/>
            <person name="McCombie W.R."/>
            <person name="Paulsen I."/>
            <person name="Potashkin J."/>
            <person name="Shpakovski G.V."/>
            <person name="Ussery D."/>
            <person name="Barrell B.G."/>
            <person name="Nurse P."/>
        </authorList>
    </citation>
    <scope>NUCLEOTIDE SEQUENCE [LARGE SCALE GENOMIC DNA]</scope>
    <source>
        <strain>972 / ATCC 24843</strain>
    </source>
</reference>
<reference key="2">
    <citation type="journal article" date="1997" name="DNA Res.">
        <title>Identification of open reading frames in Schizosaccharomyces pombe cDNAs.</title>
        <authorList>
            <person name="Yoshioka S."/>
            <person name="Kato K."/>
            <person name="Nakai K."/>
            <person name="Okayama H."/>
            <person name="Nojima H."/>
        </authorList>
    </citation>
    <scope>NUCLEOTIDE SEQUENCE [LARGE SCALE MRNA] OF 246-496</scope>
    <source>
        <strain>PR745</strain>
    </source>
</reference>
<reference key="3">
    <citation type="submission" date="1997-12" db="EMBL/GenBank/DDBJ databases">
        <title>S.pombe MET1 homolog.</title>
        <authorList>
            <person name="Kawamukai M."/>
        </authorList>
    </citation>
    <scope>NUCLEOTIDE SEQUENCE [MRNA] OF 407-496</scope>
</reference>
<keyword id="KW-0028">Amino-acid biosynthesis</keyword>
<keyword id="KW-0486">Methionine biosynthesis</keyword>
<keyword id="KW-0489">Methyltransferase</keyword>
<keyword id="KW-0627">Porphyrin biosynthesis</keyword>
<keyword id="KW-1185">Reference proteome</keyword>
<keyword id="KW-0949">S-adenosyl-L-methionine</keyword>
<keyword id="KW-0808">Transferase</keyword>
<evidence type="ECO:0000250" key="1"/>
<evidence type="ECO:0000305" key="2"/>
<proteinExistence type="evidence at transcript level"/>
<protein>
    <recommendedName>
        <fullName>Probable uroporphyrinogen-III C-methyltransferase</fullName>
        <ecNumber>2.1.1.107</ecNumber>
    </recommendedName>
</protein>
<feature type="chain" id="PRO_0000150386" description="Probable uroporphyrinogen-III C-methyltransferase">
    <location>
        <begin position="1"/>
        <end position="496"/>
    </location>
</feature>
<feature type="sequence conflict" description="In Ref. 2; BAA13785." evidence="2" ref="2">
    <original>F</original>
    <variation>L</variation>
    <location>
        <position position="330"/>
    </location>
</feature>
<feature type="sequence conflict" description="In Ref. 2." evidence="2" ref="2">
    <original>K</original>
    <variation>E</variation>
    <location>
        <position position="343"/>
    </location>
</feature>
<feature type="sequence conflict" description="In Ref. 2." evidence="2" ref="2">
    <original>G</original>
    <variation>S</variation>
    <location>
        <position position="345"/>
    </location>
</feature>
<feature type="sequence conflict" description="In Ref. 2; BAA13785." evidence="2" ref="2">
    <original>A</original>
    <variation>P</variation>
    <location>
        <position position="379"/>
    </location>
</feature>
<name>SUMT_SCHPO</name>
<dbReference type="EC" id="2.1.1.107"/>
<dbReference type="EMBL" id="CU329672">
    <property type="protein sequence ID" value="CAA20780.1"/>
    <property type="molecule type" value="Genomic_DNA"/>
</dbReference>
<dbReference type="EMBL" id="D89123">
    <property type="protein sequence ID" value="BAA13785.1"/>
    <property type="molecule type" value="mRNA"/>
</dbReference>
<dbReference type="EMBL" id="AB009602">
    <property type="protein sequence ID" value="BAA23999.1"/>
    <property type="molecule type" value="mRNA"/>
</dbReference>
<dbReference type="PIR" id="T41114">
    <property type="entry name" value="T41114"/>
</dbReference>
<dbReference type="PIR" id="T42365">
    <property type="entry name" value="T42365"/>
</dbReference>
<dbReference type="PIR" id="T43302">
    <property type="entry name" value="T43302"/>
</dbReference>
<dbReference type="SMR" id="O74468"/>
<dbReference type="BioGRID" id="275519">
    <property type="interactions" value="27"/>
</dbReference>
<dbReference type="FunCoup" id="O74468">
    <property type="interactions" value="110"/>
</dbReference>
<dbReference type="STRING" id="284812.O74468"/>
<dbReference type="iPTMnet" id="O74468"/>
<dbReference type="PaxDb" id="4896-SPCC1739.06c.1"/>
<dbReference type="EnsemblFungi" id="SPCC1739.06c.1">
    <property type="protein sequence ID" value="SPCC1739.06c.1:pep"/>
    <property type="gene ID" value="SPCC1739.06c"/>
</dbReference>
<dbReference type="KEGG" id="spo:2538945"/>
<dbReference type="PomBase" id="SPCC1739.06c"/>
<dbReference type="VEuPathDB" id="FungiDB:SPCC1739.06c"/>
<dbReference type="eggNOG" id="KOG1527">
    <property type="taxonomic scope" value="Eukaryota"/>
</dbReference>
<dbReference type="HOGENOM" id="CLU_011276_11_1_1"/>
<dbReference type="InParanoid" id="O74468"/>
<dbReference type="OMA" id="EDLNWSA"/>
<dbReference type="PhylomeDB" id="O74468"/>
<dbReference type="PRO" id="PR:O74468"/>
<dbReference type="Proteomes" id="UP000002485">
    <property type="component" value="Chromosome III"/>
</dbReference>
<dbReference type="GO" id="GO:0004851">
    <property type="term" value="F:uroporphyrin-III C-methyltransferase activity"/>
    <property type="evidence" value="ECO:0000318"/>
    <property type="project" value="GO_Central"/>
</dbReference>
<dbReference type="GO" id="GO:0009086">
    <property type="term" value="P:methionine biosynthetic process"/>
    <property type="evidence" value="ECO:0007669"/>
    <property type="project" value="UniProtKB-KW"/>
</dbReference>
<dbReference type="GO" id="GO:0032259">
    <property type="term" value="P:methylation"/>
    <property type="evidence" value="ECO:0007669"/>
    <property type="project" value="UniProtKB-KW"/>
</dbReference>
<dbReference type="GO" id="GO:0019354">
    <property type="term" value="P:siroheme biosynthetic process"/>
    <property type="evidence" value="ECO:0000318"/>
    <property type="project" value="GO_Central"/>
</dbReference>
<dbReference type="GO" id="GO:0000103">
    <property type="term" value="P:sulfate assimilation"/>
    <property type="evidence" value="ECO:0007669"/>
    <property type="project" value="InterPro"/>
</dbReference>
<dbReference type="CDD" id="cd11642">
    <property type="entry name" value="SUMT"/>
    <property type="match status" value="1"/>
</dbReference>
<dbReference type="FunFam" id="3.40.1010.10:FF:000006">
    <property type="entry name" value="Siroheme synthase, putative"/>
    <property type="match status" value="1"/>
</dbReference>
<dbReference type="FunFam" id="3.30.950.10:FF:000005">
    <property type="entry name" value="Uroporphyrin-III c-methyltransferase, putative"/>
    <property type="match status" value="1"/>
</dbReference>
<dbReference type="Gene3D" id="3.40.1010.10">
    <property type="entry name" value="Cobalt-precorrin-4 Transmethylase, Domain 1"/>
    <property type="match status" value="1"/>
</dbReference>
<dbReference type="Gene3D" id="3.30.950.10">
    <property type="entry name" value="Methyltransferase, Cobalt-precorrin-4 Transmethylase, Domain 2"/>
    <property type="match status" value="1"/>
</dbReference>
<dbReference type="Gene3D" id="3.40.50.720">
    <property type="entry name" value="NAD(P)-binding Rossmann-like Domain"/>
    <property type="match status" value="1"/>
</dbReference>
<dbReference type="InterPro" id="IPR000878">
    <property type="entry name" value="4pyrrol_Mease"/>
</dbReference>
<dbReference type="InterPro" id="IPR035996">
    <property type="entry name" value="4pyrrol_Methylase_sf"/>
</dbReference>
<dbReference type="InterPro" id="IPR014777">
    <property type="entry name" value="4pyrrole_Mease_sub1"/>
</dbReference>
<dbReference type="InterPro" id="IPR014776">
    <property type="entry name" value="4pyrrole_Mease_sub2"/>
</dbReference>
<dbReference type="InterPro" id="IPR006366">
    <property type="entry name" value="CobA/CysG_C"/>
</dbReference>
<dbReference type="InterPro" id="IPR012066">
    <property type="entry name" value="Met1_fungi"/>
</dbReference>
<dbReference type="InterPro" id="IPR050161">
    <property type="entry name" value="Siro_Cobalamin_biosynth"/>
</dbReference>
<dbReference type="InterPro" id="IPR003043">
    <property type="entry name" value="Uropor_MeTrfase_CS"/>
</dbReference>
<dbReference type="NCBIfam" id="TIGR01469">
    <property type="entry name" value="cobA_cysG_Cterm"/>
    <property type="match status" value="1"/>
</dbReference>
<dbReference type="PANTHER" id="PTHR45790">
    <property type="entry name" value="SIROHEME SYNTHASE-RELATED"/>
    <property type="match status" value="1"/>
</dbReference>
<dbReference type="PANTHER" id="PTHR45790:SF6">
    <property type="entry name" value="UROPORPHYRINOGEN-III C-METHYLTRANSFERASE"/>
    <property type="match status" value="1"/>
</dbReference>
<dbReference type="Pfam" id="PF13241">
    <property type="entry name" value="NAD_binding_7"/>
    <property type="match status" value="1"/>
</dbReference>
<dbReference type="Pfam" id="PF00590">
    <property type="entry name" value="TP_methylase"/>
    <property type="match status" value="1"/>
</dbReference>
<dbReference type="PIRSF" id="PIRSF036555">
    <property type="entry name" value="SUMT_yeast"/>
    <property type="match status" value="1"/>
</dbReference>
<dbReference type="SUPFAM" id="SSF75615">
    <property type="entry name" value="Siroheme synthase middle domains-like"/>
    <property type="match status" value="1"/>
</dbReference>
<dbReference type="SUPFAM" id="SSF53790">
    <property type="entry name" value="Tetrapyrrole methylase"/>
    <property type="match status" value="1"/>
</dbReference>
<dbReference type="PROSITE" id="PS00840">
    <property type="entry name" value="SUMT_2"/>
    <property type="match status" value="1"/>
</dbReference>
<organism>
    <name type="scientific">Schizosaccharomyces pombe (strain 972 / ATCC 24843)</name>
    <name type="common">Fission yeast</name>
    <dbReference type="NCBI Taxonomy" id="284812"/>
    <lineage>
        <taxon>Eukaryota</taxon>
        <taxon>Fungi</taxon>
        <taxon>Dikarya</taxon>
        <taxon>Ascomycota</taxon>
        <taxon>Taphrinomycotina</taxon>
        <taxon>Schizosaccharomycetes</taxon>
        <taxon>Schizosaccharomycetales</taxon>
        <taxon>Schizosaccharomycetaceae</taxon>
        <taxon>Schizosaccharomyces</taxon>
    </lineage>
</organism>